<organism>
    <name type="scientific">Salmonella paratyphi C (strain RKS4594)</name>
    <dbReference type="NCBI Taxonomy" id="476213"/>
    <lineage>
        <taxon>Bacteria</taxon>
        <taxon>Pseudomonadati</taxon>
        <taxon>Pseudomonadota</taxon>
        <taxon>Gammaproteobacteria</taxon>
        <taxon>Enterobacterales</taxon>
        <taxon>Enterobacteriaceae</taxon>
        <taxon>Salmonella</taxon>
    </lineage>
</organism>
<gene>
    <name evidence="1" type="primary">lepA</name>
    <name type="ordered locus">SPC_1066</name>
</gene>
<accession>C0PYG5</accession>
<proteinExistence type="inferred from homology"/>
<name>LEPA_SALPC</name>
<keyword id="KW-0997">Cell inner membrane</keyword>
<keyword id="KW-1003">Cell membrane</keyword>
<keyword id="KW-0342">GTP-binding</keyword>
<keyword id="KW-0378">Hydrolase</keyword>
<keyword id="KW-0472">Membrane</keyword>
<keyword id="KW-0547">Nucleotide-binding</keyword>
<keyword id="KW-0648">Protein biosynthesis</keyword>
<sequence length="599" mass="66524">MKNIRNFSIIAHIDHGKSTLSDRIIQICGGLSDREMEAQVLDSMDLERERGITIKAQSVTLDFKASDGETYQLNFIDTPGHVDFSYEVSRSLAACEGALLVVDAGQGVEAQTLANCYTAMEMDLEVVPVLNKIDLPAADPERVAEEIEDIVGIDATDAVRCSAKTGVGVTDVLERLVRDIPPPQGDPDGPLQALIIDSWFDNYLGVVSLVRIKNGTMRKGDKIKVMSTGQTYNADRLGIFTPKQVDRSELKCGEVGWLVCAIKDILGAPVGDTLTSARNPAEKALPGFKKVKPQVYAGLFPVSSDDYESFRDALGKLSLNDASLFYEPESSSALGFGFRCGFLGLLHMEIIQERLEREYDLDLITTAPTVVYEVETTAKETIYVDSPSKLPPLNNIYELREPIAECHMLLPQAYLGNVITLCIEKRGVQTNMVYHGNQVALTYEIPMAEVVLDFFDRLKSTSRGYASLDYNFKRFQASDMVRVDVLINNERVDALALITHRDNSQSRGRELVEKMKDLIPRQQFDIAIQAAIGTHIIARSTVKQLRKNVLAKCYGGDISRKKKLLQKQKEGKKRMKQIGNVELPQEAFLAILHVGKDNK</sequence>
<protein>
    <recommendedName>
        <fullName evidence="1">Elongation factor 4</fullName>
        <shortName evidence="1">EF-4</shortName>
        <ecNumber evidence="1">3.6.5.n1</ecNumber>
    </recommendedName>
    <alternativeName>
        <fullName evidence="1">Ribosomal back-translocase LepA</fullName>
    </alternativeName>
</protein>
<comment type="function">
    <text evidence="1">Required for accurate and efficient protein synthesis under certain stress conditions. May act as a fidelity factor of the translation reaction, by catalyzing a one-codon backward translocation of tRNAs on improperly translocated ribosomes. Back-translocation proceeds from a post-translocation (POST) complex to a pre-translocation (PRE) complex, thus giving elongation factor G a second chance to translocate the tRNAs correctly. Binds to ribosomes in a GTP-dependent manner.</text>
</comment>
<comment type="catalytic activity">
    <reaction evidence="1">
        <text>GTP + H2O = GDP + phosphate + H(+)</text>
        <dbReference type="Rhea" id="RHEA:19669"/>
        <dbReference type="ChEBI" id="CHEBI:15377"/>
        <dbReference type="ChEBI" id="CHEBI:15378"/>
        <dbReference type="ChEBI" id="CHEBI:37565"/>
        <dbReference type="ChEBI" id="CHEBI:43474"/>
        <dbReference type="ChEBI" id="CHEBI:58189"/>
        <dbReference type="EC" id="3.6.5.n1"/>
    </reaction>
</comment>
<comment type="subcellular location">
    <subcellularLocation>
        <location evidence="1">Cell inner membrane</location>
        <topology evidence="1">Peripheral membrane protein</topology>
        <orientation evidence="1">Cytoplasmic side</orientation>
    </subcellularLocation>
</comment>
<comment type="similarity">
    <text evidence="1">Belongs to the TRAFAC class translation factor GTPase superfamily. Classic translation factor GTPase family. LepA subfamily.</text>
</comment>
<dbReference type="EC" id="3.6.5.n1" evidence="1"/>
<dbReference type="EMBL" id="CP000857">
    <property type="protein sequence ID" value="ACN45232.1"/>
    <property type="molecule type" value="Genomic_DNA"/>
</dbReference>
<dbReference type="RefSeq" id="WP_000790151.1">
    <property type="nucleotide sequence ID" value="NC_012125.1"/>
</dbReference>
<dbReference type="SMR" id="C0PYG5"/>
<dbReference type="KEGG" id="sei:SPC_1066"/>
<dbReference type="HOGENOM" id="CLU_009995_3_3_6"/>
<dbReference type="Proteomes" id="UP000001599">
    <property type="component" value="Chromosome"/>
</dbReference>
<dbReference type="GO" id="GO:0005886">
    <property type="term" value="C:plasma membrane"/>
    <property type="evidence" value="ECO:0007669"/>
    <property type="project" value="UniProtKB-SubCell"/>
</dbReference>
<dbReference type="GO" id="GO:0005525">
    <property type="term" value="F:GTP binding"/>
    <property type="evidence" value="ECO:0007669"/>
    <property type="project" value="UniProtKB-UniRule"/>
</dbReference>
<dbReference type="GO" id="GO:0003924">
    <property type="term" value="F:GTPase activity"/>
    <property type="evidence" value="ECO:0007669"/>
    <property type="project" value="UniProtKB-UniRule"/>
</dbReference>
<dbReference type="GO" id="GO:0097216">
    <property type="term" value="F:guanosine tetraphosphate binding"/>
    <property type="evidence" value="ECO:0007669"/>
    <property type="project" value="UniProtKB-ARBA"/>
</dbReference>
<dbReference type="GO" id="GO:0043022">
    <property type="term" value="F:ribosome binding"/>
    <property type="evidence" value="ECO:0007669"/>
    <property type="project" value="UniProtKB-UniRule"/>
</dbReference>
<dbReference type="GO" id="GO:0003746">
    <property type="term" value="F:translation elongation factor activity"/>
    <property type="evidence" value="ECO:0007669"/>
    <property type="project" value="UniProtKB-UniRule"/>
</dbReference>
<dbReference type="GO" id="GO:0045727">
    <property type="term" value="P:positive regulation of translation"/>
    <property type="evidence" value="ECO:0007669"/>
    <property type="project" value="UniProtKB-UniRule"/>
</dbReference>
<dbReference type="CDD" id="cd03699">
    <property type="entry name" value="EF4_II"/>
    <property type="match status" value="1"/>
</dbReference>
<dbReference type="CDD" id="cd16260">
    <property type="entry name" value="EF4_III"/>
    <property type="match status" value="1"/>
</dbReference>
<dbReference type="CDD" id="cd01890">
    <property type="entry name" value="LepA"/>
    <property type="match status" value="1"/>
</dbReference>
<dbReference type="CDD" id="cd03709">
    <property type="entry name" value="lepA_C"/>
    <property type="match status" value="1"/>
</dbReference>
<dbReference type="FunFam" id="3.30.70.240:FF:000005">
    <property type="entry name" value="Elongation factor 4"/>
    <property type="match status" value="1"/>
</dbReference>
<dbReference type="FunFam" id="3.40.50.300:FF:000078">
    <property type="entry name" value="Elongation factor 4"/>
    <property type="match status" value="1"/>
</dbReference>
<dbReference type="FunFam" id="2.40.30.10:FF:000015">
    <property type="entry name" value="Translation factor GUF1, mitochondrial"/>
    <property type="match status" value="1"/>
</dbReference>
<dbReference type="FunFam" id="3.30.70.2570:FF:000001">
    <property type="entry name" value="Translation factor GUF1, mitochondrial"/>
    <property type="match status" value="1"/>
</dbReference>
<dbReference type="FunFam" id="3.30.70.870:FF:000004">
    <property type="entry name" value="Translation factor GUF1, mitochondrial"/>
    <property type="match status" value="1"/>
</dbReference>
<dbReference type="Gene3D" id="3.30.70.240">
    <property type="match status" value="1"/>
</dbReference>
<dbReference type="Gene3D" id="3.30.70.2570">
    <property type="entry name" value="Elongation factor 4, C-terminal domain"/>
    <property type="match status" value="1"/>
</dbReference>
<dbReference type="Gene3D" id="3.30.70.870">
    <property type="entry name" value="Elongation Factor G (Translational Gtpase), domain 3"/>
    <property type="match status" value="1"/>
</dbReference>
<dbReference type="Gene3D" id="3.40.50.300">
    <property type="entry name" value="P-loop containing nucleotide triphosphate hydrolases"/>
    <property type="match status" value="1"/>
</dbReference>
<dbReference type="Gene3D" id="2.40.30.10">
    <property type="entry name" value="Translation factors"/>
    <property type="match status" value="1"/>
</dbReference>
<dbReference type="HAMAP" id="MF_00071">
    <property type="entry name" value="LepA"/>
    <property type="match status" value="1"/>
</dbReference>
<dbReference type="InterPro" id="IPR006297">
    <property type="entry name" value="EF-4"/>
</dbReference>
<dbReference type="InterPro" id="IPR035647">
    <property type="entry name" value="EFG_III/V"/>
</dbReference>
<dbReference type="InterPro" id="IPR000640">
    <property type="entry name" value="EFG_V-like"/>
</dbReference>
<dbReference type="InterPro" id="IPR004161">
    <property type="entry name" value="EFTu-like_2"/>
</dbReference>
<dbReference type="InterPro" id="IPR031157">
    <property type="entry name" value="G_TR_CS"/>
</dbReference>
<dbReference type="InterPro" id="IPR038363">
    <property type="entry name" value="LepA_C_sf"/>
</dbReference>
<dbReference type="InterPro" id="IPR013842">
    <property type="entry name" value="LepA_CTD"/>
</dbReference>
<dbReference type="InterPro" id="IPR035654">
    <property type="entry name" value="LepA_IV"/>
</dbReference>
<dbReference type="InterPro" id="IPR027417">
    <property type="entry name" value="P-loop_NTPase"/>
</dbReference>
<dbReference type="InterPro" id="IPR005225">
    <property type="entry name" value="Small_GTP-bd"/>
</dbReference>
<dbReference type="InterPro" id="IPR000795">
    <property type="entry name" value="T_Tr_GTP-bd_dom"/>
</dbReference>
<dbReference type="NCBIfam" id="TIGR01393">
    <property type="entry name" value="lepA"/>
    <property type="match status" value="1"/>
</dbReference>
<dbReference type="NCBIfam" id="TIGR00231">
    <property type="entry name" value="small_GTP"/>
    <property type="match status" value="1"/>
</dbReference>
<dbReference type="PANTHER" id="PTHR43512:SF4">
    <property type="entry name" value="TRANSLATION FACTOR GUF1 HOMOLOG, CHLOROPLASTIC"/>
    <property type="match status" value="1"/>
</dbReference>
<dbReference type="PANTHER" id="PTHR43512">
    <property type="entry name" value="TRANSLATION FACTOR GUF1-RELATED"/>
    <property type="match status" value="1"/>
</dbReference>
<dbReference type="Pfam" id="PF00679">
    <property type="entry name" value="EFG_C"/>
    <property type="match status" value="1"/>
</dbReference>
<dbReference type="Pfam" id="PF00009">
    <property type="entry name" value="GTP_EFTU"/>
    <property type="match status" value="1"/>
</dbReference>
<dbReference type="Pfam" id="PF03144">
    <property type="entry name" value="GTP_EFTU_D2"/>
    <property type="match status" value="1"/>
</dbReference>
<dbReference type="Pfam" id="PF06421">
    <property type="entry name" value="LepA_C"/>
    <property type="match status" value="1"/>
</dbReference>
<dbReference type="PRINTS" id="PR00315">
    <property type="entry name" value="ELONGATNFCT"/>
</dbReference>
<dbReference type="SUPFAM" id="SSF54980">
    <property type="entry name" value="EF-G C-terminal domain-like"/>
    <property type="match status" value="2"/>
</dbReference>
<dbReference type="SUPFAM" id="SSF52540">
    <property type="entry name" value="P-loop containing nucleoside triphosphate hydrolases"/>
    <property type="match status" value="1"/>
</dbReference>
<dbReference type="PROSITE" id="PS00301">
    <property type="entry name" value="G_TR_1"/>
    <property type="match status" value="1"/>
</dbReference>
<dbReference type="PROSITE" id="PS51722">
    <property type="entry name" value="G_TR_2"/>
    <property type="match status" value="1"/>
</dbReference>
<reference key="1">
    <citation type="journal article" date="2009" name="PLoS ONE">
        <title>Salmonella paratyphi C: genetic divergence from Salmonella choleraesuis and pathogenic convergence with Salmonella typhi.</title>
        <authorList>
            <person name="Liu W.-Q."/>
            <person name="Feng Y."/>
            <person name="Wang Y."/>
            <person name="Zou Q.-H."/>
            <person name="Chen F."/>
            <person name="Guo J.-T."/>
            <person name="Peng Y.-H."/>
            <person name="Jin Y."/>
            <person name="Li Y.-G."/>
            <person name="Hu S.-N."/>
            <person name="Johnston R.N."/>
            <person name="Liu G.-R."/>
            <person name="Liu S.-L."/>
        </authorList>
    </citation>
    <scope>NUCLEOTIDE SEQUENCE [LARGE SCALE GENOMIC DNA]</scope>
    <source>
        <strain>RKS4594</strain>
    </source>
</reference>
<feature type="chain" id="PRO_1000190826" description="Elongation factor 4">
    <location>
        <begin position="1"/>
        <end position="599"/>
    </location>
</feature>
<feature type="domain" description="tr-type G">
    <location>
        <begin position="2"/>
        <end position="184"/>
    </location>
</feature>
<feature type="binding site" evidence="1">
    <location>
        <begin position="14"/>
        <end position="19"/>
    </location>
    <ligand>
        <name>GTP</name>
        <dbReference type="ChEBI" id="CHEBI:37565"/>
    </ligand>
</feature>
<feature type="binding site" evidence="1">
    <location>
        <begin position="131"/>
        <end position="134"/>
    </location>
    <ligand>
        <name>GTP</name>
        <dbReference type="ChEBI" id="CHEBI:37565"/>
    </ligand>
</feature>
<evidence type="ECO:0000255" key="1">
    <source>
        <dbReference type="HAMAP-Rule" id="MF_00071"/>
    </source>
</evidence>